<name>ACDH_MYCTO</name>
<sequence length="303" mass="32009">MPSKAKVAIVGSGNISTDLLYKLLRSEWLEPRWMVGIDPESDGLARAAKLGLETTHEGVDWLLAQPDKPDLVFEATSAYVHRDAAPKYAEAGIRAIDLTPAAVGPAVIPPANLREHLDAPNVNMITCGGQATIPIVYAVSRIVEVPYAEIVASVASVSAGPGTRANIDEFTKTTARGVQTIGGAARGKAIIILNPADPPMIMRDTIFCAIPTDADREAIAASIHDVVKEVQTYVPGYRLLNEPQFDEPSINSGGQALVTTFVEVEGAGDYLPPYAGNLDIMTAAATKVGEEIAKETLVVGGAR</sequence>
<accession>P9WQH2</accession>
<accession>L0TEF0</accession>
<accession>P71866</accession>
<accession>Q7D5C3</accession>
<dbReference type="EC" id="1.2.1.87" evidence="1"/>
<dbReference type="EC" id="1.2.1.10" evidence="2"/>
<dbReference type="EMBL" id="AE000516">
    <property type="protein sequence ID" value="AAK47998.1"/>
    <property type="molecule type" value="Genomic_DNA"/>
</dbReference>
<dbReference type="PIR" id="H70675">
    <property type="entry name" value="H70675"/>
</dbReference>
<dbReference type="RefSeq" id="WP_003419251.1">
    <property type="nucleotide sequence ID" value="NZ_KK341227.1"/>
</dbReference>
<dbReference type="SMR" id="P9WQH2"/>
<dbReference type="KEGG" id="mtc:MT3639"/>
<dbReference type="PATRIC" id="fig|83331.31.peg.3920"/>
<dbReference type="HOGENOM" id="CLU_062208_0_0_11"/>
<dbReference type="Proteomes" id="UP000001020">
    <property type="component" value="Chromosome"/>
</dbReference>
<dbReference type="GO" id="GO:0008774">
    <property type="term" value="F:acetaldehyde dehydrogenase (acetylating) activity"/>
    <property type="evidence" value="ECO:0007669"/>
    <property type="project" value="UniProtKB-UniRule"/>
</dbReference>
<dbReference type="GO" id="GO:0051287">
    <property type="term" value="F:NAD binding"/>
    <property type="evidence" value="ECO:0007669"/>
    <property type="project" value="UniProtKB-UniRule"/>
</dbReference>
<dbReference type="GO" id="GO:0009056">
    <property type="term" value="P:catabolic process"/>
    <property type="evidence" value="ECO:0007669"/>
    <property type="project" value="UniProtKB-KW"/>
</dbReference>
<dbReference type="CDD" id="cd23933">
    <property type="entry name" value="ALDH_C"/>
    <property type="match status" value="1"/>
</dbReference>
<dbReference type="Gene3D" id="3.30.360.10">
    <property type="entry name" value="Dihydrodipicolinate Reductase, domain 2"/>
    <property type="match status" value="1"/>
</dbReference>
<dbReference type="Gene3D" id="3.40.50.720">
    <property type="entry name" value="NAD(P)-binding Rossmann-like Domain"/>
    <property type="match status" value="1"/>
</dbReference>
<dbReference type="HAMAP" id="MF_01657">
    <property type="entry name" value="Ac_ald_DH_ac"/>
    <property type="match status" value="1"/>
</dbReference>
<dbReference type="InterPro" id="IPR003361">
    <property type="entry name" value="Acetaldehyde_dehydrogenase"/>
</dbReference>
<dbReference type="InterPro" id="IPR015426">
    <property type="entry name" value="Acetylaldehyde_DH_C"/>
</dbReference>
<dbReference type="InterPro" id="IPR036291">
    <property type="entry name" value="NAD(P)-bd_dom_sf"/>
</dbReference>
<dbReference type="InterPro" id="IPR000534">
    <property type="entry name" value="Semialdehyde_DH_NAD-bd"/>
</dbReference>
<dbReference type="NCBIfam" id="TIGR03215">
    <property type="entry name" value="ac_ald_DH_ac"/>
    <property type="match status" value="1"/>
</dbReference>
<dbReference type="NCBIfam" id="NF006157">
    <property type="entry name" value="PRK08300.1"/>
    <property type="match status" value="1"/>
</dbReference>
<dbReference type="Pfam" id="PF09290">
    <property type="entry name" value="AcetDehyd-dimer"/>
    <property type="match status" value="1"/>
</dbReference>
<dbReference type="Pfam" id="PF01118">
    <property type="entry name" value="Semialdhyde_dh"/>
    <property type="match status" value="1"/>
</dbReference>
<dbReference type="PIRSF" id="PIRSF015689">
    <property type="entry name" value="Actaldh_dh_actl"/>
    <property type="match status" value="1"/>
</dbReference>
<dbReference type="SMART" id="SM00859">
    <property type="entry name" value="Semialdhyde_dh"/>
    <property type="match status" value="1"/>
</dbReference>
<dbReference type="SUPFAM" id="SSF55347">
    <property type="entry name" value="Glyceraldehyde-3-phosphate dehydrogenase-like, C-terminal domain"/>
    <property type="match status" value="1"/>
</dbReference>
<dbReference type="SUPFAM" id="SSF51735">
    <property type="entry name" value="NAD(P)-binding Rossmann-fold domains"/>
    <property type="match status" value="1"/>
</dbReference>
<keyword id="KW-0058">Aromatic hydrocarbons catabolism</keyword>
<keyword id="KW-0520">NAD</keyword>
<keyword id="KW-0560">Oxidoreductase</keyword>
<keyword id="KW-1185">Reference proteome</keyword>
<protein>
    <recommendedName>
        <fullName evidence="1">Propanal dehydrogenase (CoA-propanoylating)</fullName>
        <ecNumber evidence="1">1.2.1.87</ecNumber>
    </recommendedName>
    <alternativeName>
        <fullName evidence="2">Acetaldehyde dehydrogenase</fullName>
        <ecNumber evidence="2">1.2.1.10</ecNumber>
    </alternativeName>
    <alternativeName>
        <fullName evidence="2">Acetaldehyde dehydrogenase [acetylating]</fullName>
    </alternativeName>
</protein>
<evidence type="ECO:0000250" key="1">
    <source>
        <dbReference type="UniProtKB" id="P9WQH3"/>
    </source>
</evidence>
<evidence type="ECO:0000255" key="2">
    <source>
        <dbReference type="HAMAP-Rule" id="MF_01657"/>
    </source>
</evidence>
<evidence type="ECO:0000312" key="3">
    <source>
        <dbReference type="EMBL" id="AAK47998.1"/>
    </source>
</evidence>
<reference key="1">
    <citation type="journal article" date="2002" name="J. Bacteriol.">
        <title>Whole-genome comparison of Mycobacterium tuberculosis clinical and laboratory strains.</title>
        <authorList>
            <person name="Fleischmann R.D."/>
            <person name="Alland D."/>
            <person name="Eisen J.A."/>
            <person name="Carpenter L."/>
            <person name="White O."/>
            <person name="Peterson J.D."/>
            <person name="DeBoy R.T."/>
            <person name="Dodson R.J."/>
            <person name="Gwinn M.L."/>
            <person name="Haft D.H."/>
            <person name="Hickey E.K."/>
            <person name="Kolonay J.F."/>
            <person name="Nelson W.C."/>
            <person name="Umayam L.A."/>
            <person name="Ermolaeva M.D."/>
            <person name="Salzberg S.L."/>
            <person name="Delcher A."/>
            <person name="Utterback T.R."/>
            <person name="Weidman J.F."/>
            <person name="Khouri H.M."/>
            <person name="Gill J."/>
            <person name="Mikula A."/>
            <person name="Bishai W."/>
            <person name="Jacobs W.R. Jr."/>
            <person name="Venter J.C."/>
            <person name="Fraser C.M."/>
        </authorList>
    </citation>
    <scope>NUCLEOTIDE SEQUENCE [LARGE SCALE GENOMIC DNA]</scope>
    <source>
        <strain>CDC 1551 / Oshkosh</strain>
    </source>
</reference>
<proteinExistence type="inferred from homology"/>
<gene>
    <name evidence="1" type="primary">hsaG</name>
    <name evidence="3" type="synonym">mhpF</name>
    <name type="ordered locus">MT3639</name>
</gene>
<feature type="chain" id="PRO_0000426776" description="Propanal dehydrogenase (CoA-propanoylating)">
    <location>
        <begin position="1"/>
        <end position="303"/>
    </location>
</feature>
<feature type="active site" description="Acyl-thioester intermediate" evidence="2">
    <location>
        <position position="127"/>
    </location>
</feature>
<feature type="binding site" evidence="2">
    <location>
        <begin position="12"/>
        <end position="15"/>
    </location>
    <ligand>
        <name>NAD(+)</name>
        <dbReference type="ChEBI" id="CHEBI:57540"/>
    </ligand>
</feature>
<feature type="binding site" evidence="2">
    <location>
        <begin position="158"/>
        <end position="166"/>
    </location>
    <ligand>
        <name>NAD(+)</name>
        <dbReference type="ChEBI" id="CHEBI:57540"/>
    </ligand>
</feature>
<feature type="binding site" evidence="2">
    <location>
        <position position="277"/>
    </location>
    <ligand>
        <name>NAD(+)</name>
        <dbReference type="ChEBI" id="CHEBI:57540"/>
    </ligand>
</feature>
<organism>
    <name type="scientific">Mycobacterium tuberculosis (strain CDC 1551 / Oshkosh)</name>
    <dbReference type="NCBI Taxonomy" id="83331"/>
    <lineage>
        <taxon>Bacteria</taxon>
        <taxon>Bacillati</taxon>
        <taxon>Actinomycetota</taxon>
        <taxon>Actinomycetes</taxon>
        <taxon>Mycobacteriales</taxon>
        <taxon>Mycobacteriaceae</taxon>
        <taxon>Mycobacterium</taxon>
        <taxon>Mycobacterium tuberculosis complex</taxon>
    </lineage>
</organism>
<comment type="function">
    <text evidence="1">Involved in cholesterol degradation. Catalyzes the conversion of propanal to propanoyl-CoA, using NAD(+) and coenzyme A.</text>
</comment>
<comment type="catalytic activity">
    <reaction evidence="1">
        <text>propanal + NAD(+) + CoA = propanoyl-CoA + NADH + H(+)</text>
        <dbReference type="Rhea" id="RHEA:36027"/>
        <dbReference type="ChEBI" id="CHEBI:15378"/>
        <dbReference type="ChEBI" id="CHEBI:17153"/>
        <dbReference type="ChEBI" id="CHEBI:57287"/>
        <dbReference type="ChEBI" id="CHEBI:57392"/>
        <dbReference type="ChEBI" id="CHEBI:57540"/>
        <dbReference type="ChEBI" id="CHEBI:57945"/>
        <dbReference type="EC" id="1.2.1.87"/>
    </reaction>
    <physiologicalReaction direction="left-to-right" evidence="1">
        <dbReference type="Rhea" id="RHEA:36028"/>
    </physiologicalReaction>
</comment>
<comment type="catalytic activity">
    <reaction evidence="1 2">
        <text>acetaldehyde + NAD(+) + CoA = acetyl-CoA + NADH + H(+)</text>
        <dbReference type="Rhea" id="RHEA:23288"/>
        <dbReference type="ChEBI" id="CHEBI:15343"/>
        <dbReference type="ChEBI" id="CHEBI:15378"/>
        <dbReference type="ChEBI" id="CHEBI:57287"/>
        <dbReference type="ChEBI" id="CHEBI:57288"/>
        <dbReference type="ChEBI" id="CHEBI:57540"/>
        <dbReference type="ChEBI" id="CHEBI:57945"/>
        <dbReference type="EC" id="1.2.1.10"/>
    </reaction>
    <physiologicalReaction direction="left-to-right" evidence="1">
        <dbReference type="Rhea" id="RHEA:23289"/>
    </physiologicalReaction>
</comment>
<comment type="subunit">
    <text evidence="1">Monomer. Forms a heterotetramer composed of two aldolase (HsaF) and two dehydrogenase (HsaG) subunits.</text>
</comment>
<comment type="similarity">
    <text evidence="2">Belongs to the acetaldehyde dehydrogenase family.</text>
</comment>